<feature type="chain" id="PRO_0000136608" description="Tryptophan--tRNA ligase">
    <location>
        <begin position="1"/>
        <end position="355"/>
    </location>
</feature>
<feature type="short sequence motif" description="'HIGH' region" evidence="1">
    <location>
        <begin position="14"/>
        <end position="22"/>
    </location>
</feature>
<feature type="short sequence motif" description="'KMSKS' region" evidence="1">
    <location>
        <begin position="217"/>
        <end position="221"/>
    </location>
</feature>
<feature type="binding site" evidence="1">
    <location>
        <begin position="13"/>
        <end position="15"/>
    </location>
    <ligand>
        <name>ATP</name>
        <dbReference type="ChEBI" id="CHEBI:30616"/>
    </ligand>
</feature>
<feature type="binding site" evidence="1">
    <location>
        <begin position="21"/>
        <end position="22"/>
    </location>
    <ligand>
        <name>ATP</name>
        <dbReference type="ChEBI" id="CHEBI:30616"/>
    </ligand>
</feature>
<feature type="binding site" evidence="1">
    <location>
        <position position="137"/>
    </location>
    <ligand>
        <name>L-tryptophan</name>
        <dbReference type="ChEBI" id="CHEBI:57912"/>
    </ligand>
</feature>
<feature type="binding site" evidence="1">
    <location>
        <begin position="149"/>
        <end position="151"/>
    </location>
    <ligand>
        <name>ATP</name>
        <dbReference type="ChEBI" id="CHEBI:30616"/>
    </ligand>
</feature>
<feature type="binding site" evidence="1">
    <location>
        <position position="208"/>
    </location>
    <ligand>
        <name>ATP</name>
        <dbReference type="ChEBI" id="CHEBI:30616"/>
    </ligand>
</feature>
<feature type="binding site" evidence="1">
    <location>
        <begin position="217"/>
        <end position="221"/>
    </location>
    <ligand>
        <name>ATP</name>
        <dbReference type="ChEBI" id="CHEBI:30616"/>
    </ligand>
</feature>
<reference key="1">
    <citation type="journal article" date="2002" name="Proc. Natl. Acad. Sci. U.S.A.">
        <title>The genome sequence of the facultative intracellular pathogen Brucella melitensis.</title>
        <authorList>
            <person name="DelVecchio V.G."/>
            <person name="Kapatral V."/>
            <person name="Redkar R.J."/>
            <person name="Patra G."/>
            <person name="Mujer C."/>
            <person name="Los T."/>
            <person name="Ivanova N."/>
            <person name="Anderson I."/>
            <person name="Bhattacharyya A."/>
            <person name="Lykidis A."/>
            <person name="Reznik G."/>
            <person name="Jablonski L."/>
            <person name="Larsen N."/>
            <person name="D'Souza M."/>
            <person name="Bernal A."/>
            <person name="Mazur M."/>
            <person name="Goltsman E."/>
            <person name="Selkov E."/>
            <person name="Elzer P.H."/>
            <person name="Hagius S."/>
            <person name="O'Callaghan D."/>
            <person name="Letesson J.-J."/>
            <person name="Haselkorn R."/>
            <person name="Kyrpides N.C."/>
            <person name="Overbeek R."/>
        </authorList>
    </citation>
    <scope>NUCLEOTIDE SEQUENCE [LARGE SCALE GENOMIC DNA]</scope>
    <source>
        <strain>ATCC 23456 / CCUG 17765 / NCTC 10094 / 16M</strain>
    </source>
</reference>
<organism>
    <name type="scientific">Brucella melitensis biotype 1 (strain ATCC 23456 / CCUG 17765 / NCTC 10094 / 16M)</name>
    <dbReference type="NCBI Taxonomy" id="224914"/>
    <lineage>
        <taxon>Bacteria</taxon>
        <taxon>Pseudomonadati</taxon>
        <taxon>Pseudomonadota</taxon>
        <taxon>Alphaproteobacteria</taxon>
        <taxon>Hyphomicrobiales</taxon>
        <taxon>Brucellaceae</taxon>
        <taxon>Brucella/Ochrobactrum group</taxon>
        <taxon>Brucella</taxon>
    </lineage>
</organism>
<name>SYW_BRUME</name>
<keyword id="KW-0030">Aminoacyl-tRNA synthetase</keyword>
<keyword id="KW-0067">ATP-binding</keyword>
<keyword id="KW-0963">Cytoplasm</keyword>
<keyword id="KW-0436">Ligase</keyword>
<keyword id="KW-0547">Nucleotide-binding</keyword>
<keyword id="KW-0648">Protein biosynthesis</keyword>
<proteinExistence type="inferred from homology"/>
<dbReference type="EC" id="6.1.1.2" evidence="1"/>
<dbReference type="EMBL" id="AE008917">
    <property type="protein sequence ID" value="AAL52987.1"/>
    <property type="status" value="ALT_INIT"/>
    <property type="molecule type" value="Genomic_DNA"/>
</dbReference>
<dbReference type="PIR" id="AH3477">
    <property type="entry name" value="AH3477"/>
</dbReference>
<dbReference type="RefSeq" id="WP_004684672.1">
    <property type="nucleotide sequence ID" value="NZ_GG703778.1"/>
</dbReference>
<dbReference type="SMR" id="P67586"/>
<dbReference type="GeneID" id="97534444"/>
<dbReference type="KEGG" id="bme:BMEI1806"/>
<dbReference type="KEGG" id="bmel:DK63_1681"/>
<dbReference type="PATRIC" id="fig|224914.52.peg.1776"/>
<dbReference type="eggNOG" id="COG0180">
    <property type="taxonomic scope" value="Bacteria"/>
</dbReference>
<dbReference type="Proteomes" id="UP000000419">
    <property type="component" value="Chromosome I"/>
</dbReference>
<dbReference type="GO" id="GO:0005829">
    <property type="term" value="C:cytosol"/>
    <property type="evidence" value="ECO:0007669"/>
    <property type="project" value="TreeGrafter"/>
</dbReference>
<dbReference type="GO" id="GO:0005524">
    <property type="term" value="F:ATP binding"/>
    <property type="evidence" value="ECO:0007669"/>
    <property type="project" value="UniProtKB-UniRule"/>
</dbReference>
<dbReference type="GO" id="GO:0004830">
    <property type="term" value="F:tryptophan-tRNA ligase activity"/>
    <property type="evidence" value="ECO:0007669"/>
    <property type="project" value="UniProtKB-UniRule"/>
</dbReference>
<dbReference type="GO" id="GO:0006436">
    <property type="term" value="P:tryptophanyl-tRNA aminoacylation"/>
    <property type="evidence" value="ECO:0007669"/>
    <property type="project" value="UniProtKB-UniRule"/>
</dbReference>
<dbReference type="CDD" id="cd00806">
    <property type="entry name" value="TrpRS_core"/>
    <property type="match status" value="1"/>
</dbReference>
<dbReference type="FunFam" id="1.10.240.10:FF:000002">
    <property type="entry name" value="Tryptophan--tRNA ligase"/>
    <property type="match status" value="1"/>
</dbReference>
<dbReference type="Gene3D" id="3.40.50.620">
    <property type="entry name" value="HUPs"/>
    <property type="match status" value="1"/>
</dbReference>
<dbReference type="Gene3D" id="1.10.240.10">
    <property type="entry name" value="Tyrosyl-Transfer RNA Synthetase"/>
    <property type="match status" value="1"/>
</dbReference>
<dbReference type="HAMAP" id="MF_00140_B">
    <property type="entry name" value="Trp_tRNA_synth_B"/>
    <property type="match status" value="1"/>
</dbReference>
<dbReference type="InterPro" id="IPR001412">
    <property type="entry name" value="aa-tRNA-synth_I_CS"/>
</dbReference>
<dbReference type="InterPro" id="IPR002305">
    <property type="entry name" value="aa-tRNA-synth_Ic"/>
</dbReference>
<dbReference type="InterPro" id="IPR014729">
    <property type="entry name" value="Rossmann-like_a/b/a_fold"/>
</dbReference>
<dbReference type="InterPro" id="IPR002306">
    <property type="entry name" value="Trp-tRNA-ligase"/>
</dbReference>
<dbReference type="InterPro" id="IPR024109">
    <property type="entry name" value="Trp-tRNA-ligase_bac-type"/>
</dbReference>
<dbReference type="InterPro" id="IPR050203">
    <property type="entry name" value="Trp-tRNA_synthetase"/>
</dbReference>
<dbReference type="NCBIfam" id="TIGR00233">
    <property type="entry name" value="trpS"/>
    <property type="match status" value="1"/>
</dbReference>
<dbReference type="PANTHER" id="PTHR43766">
    <property type="entry name" value="TRYPTOPHAN--TRNA LIGASE, MITOCHONDRIAL"/>
    <property type="match status" value="1"/>
</dbReference>
<dbReference type="PANTHER" id="PTHR43766:SF1">
    <property type="entry name" value="TRYPTOPHAN--TRNA LIGASE, MITOCHONDRIAL"/>
    <property type="match status" value="1"/>
</dbReference>
<dbReference type="Pfam" id="PF00579">
    <property type="entry name" value="tRNA-synt_1b"/>
    <property type="match status" value="1"/>
</dbReference>
<dbReference type="PRINTS" id="PR01039">
    <property type="entry name" value="TRNASYNTHTRP"/>
</dbReference>
<dbReference type="SUPFAM" id="SSF52374">
    <property type="entry name" value="Nucleotidylyl transferase"/>
    <property type="match status" value="1"/>
</dbReference>
<dbReference type="PROSITE" id="PS00178">
    <property type="entry name" value="AA_TRNA_LIGASE_I"/>
    <property type="match status" value="1"/>
</dbReference>
<sequence>MSTFKPLVFSGVQPTGNLHLGNYLGAIKRWVEVQKTEECIYCVVDMHALTVSPDPVELMQSTREVTAAFLAAGIDPKKSIVFNQSRVMQHAELAWVFNCVARIGWMSRMTQFKDKAGKDRENASLGLFAYPSLMAADILLYRATAVPVGEDQKQHLELTRDIAQKFNNDYSDRIASLGVGVDMKVGDEQVSGFFPLTEPMISGPAMRIMSLRDGTKKMSKSDPSDLSRINLIDDEDTITKKIRKAKTDSDGLPSEVDGLEGRPEADNLVGIYAALSSTTKEDVLKEFGGRQFSDLKASLADLAVARLSPITHEMRRLVADPAHIDSVLRDGGEQAGAIAEQTMRHVRDIVGWLQN</sequence>
<evidence type="ECO:0000255" key="1">
    <source>
        <dbReference type="HAMAP-Rule" id="MF_00140"/>
    </source>
</evidence>
<evidence type="ECO:0000305" key="2"/>
<accession>P67586</accession>
<accession>Q8G314</accession>
<accession>Q8YES1</accession>
<gene>
    <name evidence="1" type="primary">trpS</name>
    <name type="ordered locus">BMEI1806</name>
</gene>
<comment type="function">
    <text evidence="1">Catalyzes the attachment of tryptophan to tRNA(Trp).</text>
</comment>
<comment type="catalytic activity">
    <reaction evidence="1">
        <text>tRNA(Trp) + L-tryptophan + ATP = L-tryptophyl-tRNA(Trp) + AMP + diphosphate + H(+)</text>
        <dbReference type="Rhea" id="RHEA:24080"/>
        <dbReference type="Rhea" id="RHEA-COMP:9671"/>
        <dbReference type="Rhea" id="RHEA-COMP:9705"/>
        <dbReference type="ChEBI" id="CHEBI:15378"/>
        <dbReference type="ChEBI" id="CHEBI:30616"/>
        <dbReference type="ChEBI" id="CHEBI:33019"/>
        <dbReference type="ChEBI" id="CHEBI:57912"/>
        <dbReference type="ChEBI" id="CHEBI:78442"/>
        <dbReference type="ChEBI" id="CHEBI:78535"/>
        <dbReference type="ChEBI" id="CHEBI:456215"/>
        <dbReference type="EC" id="6.1.1.2"/>
    </reaction>
</comment>
<comment type="subunit">
    <text evidence="1">Homodimer.</text>
</comment>
<comment type="subcellular location">
    <subcellularLocation>
        <location evidence="1">Cytoplasm</location>
    </subcellularLocation>
</comment>
<comment type="similarity">
    <text evidence="1">Belongs to the class-I aminoacyl-tRNA synthetase family.</text>
</comment>
<comment type="sequence caution" evidence="2">
    <conflict type="erroneous initiation">
        <sequence resource="EMBL-CDS" id="AAL52987"/>
    </conflict>
</comment>
<protein>
    <recommendedName>
        <fullName evidence="1">Tryptophan--tRNA ligase</fullName>
        <ecNumber evidence="1">6.1.1.2</ecNumber>
    </recommendedName>
    <alternativeName>
        <fullName evidence="1">Tryptophanyl-tRNA synthetase</fullName>
        <shortName evidence="1">TrpRS</shortName>
    </alternativeName>
</protein>